<gene>
    <name type="ordered locus">TP_0293</name>
</gene>
<name>Y293_TREPA</name>
<proteinExistence type="predicted"/>
<accession>O83316</accession>
<sequence>MRMTRVRSLCLAYARCVRLGVFRCISLRGWAPYRAVETVLVQSALTSVERLHEMFRVY</sequence>
<protein>
    <recommendedName>
        <fullName>Uncharacterized protein TP_0293</fullName>
    </recommendedName>
</protein>
<feature type="chain" id="PRO_0000202228" description="Uncharacterized protein TP_0293">
    <location>
        <begin position="1"/>
        <end position="58"/>
    </location>
</feature>
<keyword id="KW-1185">Reference proteome</keyword>
<organism>
    <name type="scientific">Treponema pallidum (strain Nichols)</name>
    <dbReference type="NCBI Taxonomy" id="243276"/>
    <lineage>
        <taxon>Bacteria</taxon>
        <taxon>Pseudomonadati</taxon>
        <taxon>Spirochaetota</taxon>
        <taxon>Spirochaetia</taxon>
        <taxon>Spirochaetales</taxon>
        <taxon>Treponemataceae</taxon>
        <taxon>Treponema</taxon>
    </lineage>
</organism>
<reference key="1">
    <citation type="journal article" date="1998" name="Science">
        <title>Complete genome sequence of Treponema pallidum, the syphilis spirochete.</title>
        <authorList>
            <person name="Fraser C.M."/>
            <person name="Norris S.J."/>
            <person name="Weinstock G.M."/>
            <person name="White O."/>
            <person name="Sutton G.G."/>
            <person name="Dodson R.J."/>
            <person name="Gwinn M.L."/>
            <person name="Hickey E.K."/>
            <person name="Clayton R.A."/>
            <person name="Ketchum K.A."/>
            <person name="Sodergren E."/>
            <person name="Hardham J.M."/>
            <person name="McLeod M.P."/>
            <person name="Salzberg S.L."/>
            <person name="Peterson J.D."/>
            <person name="Khalak H.G."/>
            <person name="Richardson D.L."/>
            <person name="Howell J.K."/>
            <person name="Chidambaram M."/>
            <person name="Utterback T.R."/>
            <person name="McDonald L.A."/>
            <person name="Artiach P."/>
            <person name="Bowman C."/>
            <person name="Cotton M.D."/>
            <person name="Fujii C."/>
            <person name="Garland S.A."/>
            <person name="Hatch B."/>
            <person name="Horst K."/>
            <person name="Roberts K.M."/>
            <person name="Sandusky M."/>
            <person name="Weidman J.F."/>
            <person name="Smith H.O."/>
            <person name="Venter J.C."/>
        </authorList>
    </citation>
    <scope>NUCLEOTIDE SEQUENCE [LARGE SCALE GENOMIC DNA]</scope>
    <source>
        <strain>Nichols</strain>
    </source>
</reference>
<dbReference type="EMBL" id="AE000520">
    <property type="protein sequence ID" value="AAC65284.1"/>
    <property type="molecule type" value="Genomic_DNA"/>
</dbReference>
<dbReference type="PIR" id="H71344">
    <property type="entry name" value="H71344"/>
</dbReference>
<dbReference type="STRING" id="243276.TP_0293"/>
<dbReference type="EnsemblBacteria" id="AAC65284">
    <property type="protein sequence ID" value="AAC65284"/>
    <property type="gene ID" value="TP_0293"/>
</dbReference>
<dbReference type="KEGG" id="tpa:TP_0293"/>
<dbReference type="KEGG" id="tpw:TPANIC_0293"/>
<dbReference type="HOGENOM" id="CLU_2977959_0_0_12"/>
<dbReference type="Proteomes" id="UP000000811">
    <property type="component" value="Chromosome"/>
</dbReference>